<reference key="1">
    <citation type="journal article" date="2004" name="Nat. Biotechnol.">
        <title>Complete genome sequence of the metabolically versatile photosynthetic bacterium Rhodopseudomonas palustris.</title>
        <authorList>
            <person name="Larimer F.W."/>
            <person name="Chain P."/>
            <person name="Hauser L."/>
            <person name="Lamerdin J.E."/>
            <person name="Malfatti S."/>
            <person name="Do L."/>
            <person name="Land M.L."/>
            <person name="Pelletier D.A."/>
            <person name="Beatty J.T."/>
            <person name="Lang A.S."/>
            <person name="Tabita F.R."/>
            <person name="Gibson J.L."/>
            <person name="Hanson T.E."/>
            <person name="Bobst C."/>
            <person name="Torres y Torres J.L."/>
            <person name="Peres C."/>
            <person name="Harrison F.H."/>
            <person name="Gibson J."/>
            <person name="Harwood C.S."/>
        </authorList>
    </citation>
    <scope>NUCLEOTIDE SEQUENCE [LARGE SCALE GENOMIC DNA]</scope>
    <source>
        <strain>ATCC BAA-98 / CGA009</strain>
    </source>
</reference>
<gene>
    <name evidence="1" type="primary">mutL</name>
    <name type="ordered locus">RPA4371</name>
</gene>
<evidence type="ECO:0000255" key="1">
    <source>
        <dbReference type="HAMAP-Rule" id="MF_00149"/>
    </source>
</evidence>
<organism>
    <name type="scientific">Rhodopseudomonas palustris (strain ATCC BAA-98 / CGA009)</name>
    <dbReference type="NCBI Taxonomy" id="258594"/>
    <lineage>
        <taxon>Bacteria</taxon>
        <taxon>Pseudomonadati</taxon>
        <taxon>Pseudomonadota</taxon>
        <taxon>Alphaproteobacteria</taxon>
        <taxon>Hyphomicrobiales</taxon>
        <taxon>Nitrobacteraceae</taxon>
        <taxon>Rhodopseudomonas</taxon>
    </lineage>
</organism>
<dbReference type="EMBL" id="BX572607">
    <property type="protein sequence ID" value="CAE29812.1"/>
    <property type="molecule type" value="Genomic_DNA"/>
</dbReference>
<dbReference type="RefSeq" id="WP_011159905.1">
    <property type="nucleotide sequence ID" value="NZ_CP116810.1"/>
</dbReference>
<dbReference type="SMR" id="Q6N1N4"/>
<dbReference type="STRING" id="258594.RPA4371"/>
<dbReference type="GeneID" id="66895504"/>
<dbReference type="eggNOG" id="COG0323">
    <property type="taxonomic scope" value="Bacteria"/>
</dbReference>
<dbReference type="HOGENOM" id="CLU_004131_4_2_5"/>
<dbReference type="PhylomeDB" id="Q6N1N4"/>
<dbReference type="GO" id="GO:0032300">
    <property type="term" value="C:mismatch repair complex"/>
    <property type="evidence" value="ECO:0007669"/>
    <property type="project" value="InterPro"/>
</dbReference>
<dbReference type="GO" id="GO:0005524">
    <property type="term" value="F:ATP binding"/>
    <property type="evidence" value="ECO:0007669"/>
    <property type="project" value="InterPro"/>
</dbReference>
<dbReference type="GO" id="GO:0016887">
    <property type="term" value="F:ATP hydrolysis activity"/>
    <property type="evidence" value="ECO:0007669"/>
    <property type="project" value="InterPro"/>
</dbReference>
<dbReference type="GO" id="GO:0140664">
    <property type="term" value="F:ATP-dependent DNA damage sensor activity"/>
    <property type="evidence" value="ECO:0007669"/>
    <property type="project" value="InterPro"/>
</dbReference>
<dbReference type="GO" id="GO:0030983">
    <property type="term" value="F:mismatched DNA binding"/>
    <property type="evidence" value="ECO:0007669"/>
    <property type="project" value="InterPro"/>
</dbReference>
<dbReference type="GO" id="GO:0006298">
    <property type="term" value="P:mismatch repair"/>
    <property type="evidence" value="ECO:0007669"/>
    <property type="project" value="UniProtKB-UniRule"/>
</dbReference>
<dbReference type="CDD" id="cd16926">
    <property type="entry name" value="HATPase_MutL-MLH-PMS-like"/>
    <property type="match status" value="1"/>
</dbReference>
<dbReference type="CDD" id="cd00782">
    <property type="entry name" value="MutL_Trans"/>
    <property type="match status" value="1"/>
</dbReference>
<dbReference type="FunFam" id="3.30.565.10:FF:000003">
    <property type="entry name" value="DNA mismatch repair endonuclease MutL"/>
    <property type="match status" value="1"/>
</dbReference>
<dbReference type="Gene3D" id="3.30.230.10">
    <property type="match status" value="1"/>
</dbReference>
<dbReference type="Gene3D" id="3.30.565.10">
    <property type="entry name" value="Histidine kinase-like ATPase, C-terminal domain"/>
    <property type="match status" value="1"/>
</dbReference>
<dbReference type="Gene3D" id="3.30.1540.20">
    <property type="entry name" value="MutL, C-terminal domain, dimerisation subdomain"/>
    <property type="match status" value="1"/>
</dbReference>
<dbReference type="Gene3D" id="3.30.1370.100">
    <property type="entry name" value="MutL, C-terminal domain, regulatory subdomain"/>
    <property type="match status" value="1"/>
</dbReference>
<dbReference type="HAMAP" id="MF_00149">
    <property type="entry name" value="DNA_mis_repair"/>
    <property type="match status" value="1"/>
</dbReference>
<dbReference type="InterPro" id="IPR014762">
    <property type="entry name" value="DNA_mismatch_repair_CS"/>
</dbReference>
<dbReference type="InterPro" id="IPR020667">
    <property type="entry name" value="DNA_mismatch_repair_MutL"/>
</dbReference>
<dbReference type="InterPro" id="IPR013507">
    <property type="entry name" value="DNA_mismatch_S5_2-like"/>
</dbReference>
<dbReference type="InterPro" id="IPR036890">
    <property type="entry name" value="HATPase_C_sf"/>
</dbReference>
<dbReference type="InterPro" id="IPR002099">
    <property type="entry name" value="MutL/Mlh/PMS"/>
</dbReference>
<dbReference type="InterPro" id="IPR038973">
    <property type="entry name" value="MutL/Mlh/Pms-like"/>
</dbReference>
<dbReference type="InterPro" id="IPR014790">
    <property type="entry name" value="MutL_C"/>
</dbReference>
<dbReference type="InterPro" id="IPR042120">
    <property type="entry name" value="MutL_C_dimsub"/>
</dbReference>
<dbReference type="InterPro" id="IPR042121">
    <property type="entry name" value="MutL_C_regsub"/>
</dbReference>
<dbReference type="InterPro" id="IPR037198">
    <property type="entry name" value="MutL_C_sf"/>
</dbReference>
<dbReference type="InterPro" id="IPR020568">
    <property type="entry name" value="Ribosomal_Su5_D2-typ_SF"/>
</dbReference>
<dbReference type="InterPro" id="IPR014721">
    <property type="entry name" value="Ribsml_uS5_D2-typ_fold_subgr"/>
</dbReference>
<dbReference type="NCBIfam" id="TIGR00585">
    <property type="entry name" value="mutl"/>
    <property type="match status" value="1"/>
</dbReference>
<dbReference type="NCBIfam" id="NF000953">
    <property type="entry name" value="PRK00095.2-4"/>
    <property type="match status" value="1"/>
</dbReference>
<dbReference type="PANTHER" id="PTHR10073">
    <property type="entry name" value="DNA MISMATCH REPAIR PROTEIN MLH, PMS, MUTL"/>
    <property type="match status" value="1"/>
</dbReference>
<dbReference type="PANTHER" id="PTHR10073:SF12">
    <property type="entry name" value="DNA MISMATCH REPAIR PROTEIN MLH1"/>
    <property type="match status" value="1"/>
</dbReference>
<dbReference type="Pfam" id="PF01119">
    <property type="entry name" value="DNA_mis_repair"/>
    <property type="match status" value="1"/>
</dbReference>
<dbReference type="Pfam" id="PF13589">
    <property type="entry name" value="HATPase_c_3"/>
    <property type="match status" value="1"/>
</dbReference>
<dbReference type="Pfam" id="PF08676">
    <property type="entry name" value="MutL_C"/>
    <property type="match status" value="1"/>
</dbReference>
<dbReference type="SMART" id="SM01340">
    <property type="entry name" value="DNA_mis_repair"/>
    <property type="match status" value="1"/>
</dbReference>
<dbReference type="SMART" id="SM00853">
    <property type="entry name" value="MutL_C"/>
    <property type="match status" value="1"/>
</dbReference>
<dbReference type="SUPFAM" id="SSF55874">
    <property type="entry name" value="ATPase domain of HSP90 chaperone/DNA topoisomerase II/histidine kinase"/>
    <property type="match status" value="1"/>
</dbReference>
<dbReference type="SUPFAM" id="SSF118116">
    <property type="entry name" value="DNA mismatch repair protein MutL"/>
    <property type="match status" value="1"/>
</dbReference>
<dbReference type="SUPFAM" id="SSF54211">
    <property type="entry name" value="Ribosomal protein S5 domain 2-like"/>
    <property type="match status" value="1"/>
</dbReference>
<dbReference type="PROSITE" id="PS00058">
    <property type="entry name" value="DNA_MISMATCH_REPAIR_1"/>
    <property type="match status" value="1"/>
</dbReference>
<keyword id="KW-0227">DNA damage</keyword>
<keyword id="KW-0234">DNA repair</keyword>
<comment type="function">
    <text evidence="1">This protein is involved in the repair of mismatches in DNA. It is required for dam-dependent methyl-directed DNA mismatch repair. May act as a 'molecular matchmaker', a protein that promotes the formation of a stable complex between two or more DNA-binding proteins in an ATP-dependent manner without itself being part of a final effector complex.</text>
</comment>
<comment type="similarity">
    <text evidence="1">Belongs to the DNA mismatch repair MutL/HexB family.</text>
</comment>
<proteinExistence type="inferred from homology"/>
<feature type="chain" id="PRO_1000010064" description="DNA mismatch repair protein MutL">
    <location>
        <begin position="1"/>
        <end position="595"/>
    </location>
</feature>
<accession>Q6N1N4</accession>
<protein>
    <recommendedName>
        <fullName evidence="1">DNA mismatch repair protein MutL</fullName>
    </recommendedName>
</protein>
<name>MUTL_RHOPA</name>
<sequence>MPVRQLPETIVNRIAAGEVVERPASVVKELVENAIDAGASRIDIFSDGGGRRKIVIADDGSGMTQADLALAVDRHATSKLDDEDLLQIRTLGFRGEALPSIGAVARLSITTRHAAEPHAWALRVEGGDKTPIAPAALTQGTRVEVADLFFATPARLKFLKTDRTEAEAIREVVRRLAMARPDVAFTLAGEERAPVTWAAALPGAPGQLIRLGDILGADFRANAIEVRAEREGVVVEGFAAAPSLTKANALGQYLFVNGRPVRDKLILGAVRAAYSDYLPRDRHPVVALFVTLDAREVDANVHPAKTEVRFRNSGLVRALIVHALKDGLAREGRRTAANSASSVISTFRPASMPPANWDWRSSPSYPVGGSAAPSFAERAQAAFDVGAPSADIRPQEVTPDLLDRPLGAARTQIHETYIVSQTRDGLIVIDQHAAHERIVYERLKASLEANGVQRQILLIPDIVEMDEATVERLVARAEELAQFGLVIESFGPGAVAVRETPSLLGKTDASGLLRDLAEHMAEWDEALPLERRLMHVAATMACHGSVRAGRVLKPEEMNALLREMEATPNSGQCNHGRPTYVELTLADIEKLFGRR</sequence>